<dbReference type="EMBL" id="CP000936">
    <property type="protein sequence ID" value="ACA37415.1"/>
    <property type="molecule type" value="Genomic_DNA"/>
</dbReference>
<dbReference type="RefSeq" id="WP_000705090.1">
    <property type="nucleotide sequence ID" value="NC_010380.1"/>
</dbReference>
<dbReference type="SMR" id="B1I8A9"/>
<dbReference type="KEGG" id="spv:SPH_2044"/>
<dbReference type="HOGENOM" id="CLU_066607_4_0_9"/>
<dbReference type="Proteomes" id="UP000002163">
    <property type="component" value="Chromosome"/>
</dbReference>
<dbReference type="GO" id="GO:0005737">
    <property type="term" value="C:cytoplasm"/>
    <property type="evidence" value="ECO:0007669"/>
    <property type="project" value="UniProtKB-SubCell"/>
</dbReference>
<dbReference type="GO" id="GO:0006282">
    <property type="term" value="P:regulation of DNA repair"/>
    <property type="evidence" value="ECO:0007669"/>
    <property type="project" value="UniProtKB-UniRule"/>
</dbReference>
<dbReference type="Gene3D" id="1.10.10.10">
    <property type="entry name" value="Winged helix-like DNA-binding domain superfamily/Winged helix DNA-binding domain"/>
    <property type="match status" value="4"/>
</dbReference>
<dbReference type="HAMAP" id="MF_01114">
    <property type="entry name" value="RecX"/>
    <property type="match status" value="1"/>
</dbReference>
<dbReference type="InterPro" id="IPR053926">
    <property type="entry name" value="RecX_HTH_1st"/>
</dbReference>
<dbReference type="InterPro" id="IPR053924">
    <property type="entry name" value="RecX_HTH_2nd"/>
</dbReference>
<dbReference type="InterPro" id="IPR053925">
    <property type="entry name" value="RecX_HTH_3rd"/>
</dbReference>
<dbReference type="InterPro" id="IPR003783">
    <property type="entry name" value="Regulatory_RecX"/>
</dbReference>
<dbReference type="InterPro" id="IPR036388">
    <property type="entry name" value="WH-like_DNA-bd_sf"/>
</dbReference>
<dbReference type="NCBIfam" id="NF010733">
    <property type="entry name" value="PRK14135.1"/>
    <property type="match status" value="1"/>
</dbReference>
<dbReference type="PANTHER" id="PTHR33602">
    <property type="entry name" value="REGULATORY PROTEIN RECX FAMILY PROTEIN"/>
    <property type="match status" value="1"/>
</dbReference>
<dbReference type="PANTHER" id="PTHR33602:SF1">
    <property type="entry name" value="REGULATORY PROTEIN RECX FAMILY PROTEIN"/>
    <property type="match status" value="1"/>
</dbReference>
<dbReference type="Pfam" id="PF21982">
    <property type="entry name" value="RecX_HTH1"/>
    <property type="match status" value="1"/>
</dbReference>
<dbReference type="Pfam" id="PF02631">
    <property type="entry name" value="RecX_HTH2"/>
    <property type="match status" value="1"/>
</dbReference>
<dbReference type="Pfam" id="PF21981">
    <property type="entry name" value="RecX_HTH3"/>
    <property type="match status" value="1"/>
</dbReference>
<protein>
    <recommendedName>
        <fullName evidence="1">Regulatory protein RecX</fullName>
    </recommendedName>
</protein>
<organism>
    <name type="scientific">Streptococcus pneumoniae (strain Hungary19A-6)</name>
    <dbReference type="NCBI Taxonomy" id="487214"/>
    <lineage>
        <taxon>Bacteria</taxon>
        <taxon>Bacillati</taxon>
        <taxon>Bacillota</taxon>
        <taxon>Bacilli</taxon>
        <taxon>Lactobacillales</taxon>
        <taxon>Streptococcaceae</taxon>
        <taxon>Streptococcus</taxon>
    </lineage>
</organism>
<gene>
    <name evidence="1" type="primary">recX</name>
    <name type="ordered locus">SPH_2044</name>
</gene>
<feature type="chain" id="PRO_1000137199" description="Regulatory protein RecX">
    <location>
        <begin position="1"/>
        <end position="258"/>
    </location>
</feature>
<reference key="1">
    <citation type="journal article" date="2010" name="Genome Biol.">
        <title>Structure and dynamics of the pan-genome of Streptococcus pneumoniae and closely related species.</title>
        <authorList>
            <person name="Donati C."/>
            <person name="Hiller N.L."/>
            <person name="Tettelin H."/>
            <person name="Muzzi A."/>
            <person name="Croucher N.J."/>
            <person name="Angiuoli S.V."/>
            <person name="Oggioni M."/>
            <person name="Dunning Hotopp J.C."/>
            <person name="Hu F.Z."/>
            <person name="Riley D.R."/>
            <person name="Covacci A."/>
            <person name="Mitchell T.J."/>
            <person name="Bentley S.D."/>
            <person name="Kilian M."/>
            <person name="Ehrlich G.D."/>
            <person name="Rappuoli R."/>
            <person name="Moxon E.R."/>
            <person name="Masignani V."/>
        </authorList>
    </citation>
    <scope>NUCLEOTIDE SEQUENCE [LARGE SCALE GENOMIC DNA]</scope>
    <source>
        <strain>Hungary19A-6</strain>
    </source>
</reference>
<name>RECX_STRPI</name>
<sequence>MKITKLEKKKRLYLMELDNGDKCYITEDTIVRFMLSRDKVISEEELKEIQDFAQFSYGKNLALYHLSFKARTEKEVREYLKKYDIDENIVSQVIANLKEDKWINDGQYAYAIINTNQLSGDKGPYVLTQKLAQKGISKSTIEENLKEFDFSEVAQRVANKLLKKYEGKLPARALQDKIIQNLTNKGFSYSDAKIAFDELDSQVDEETTQELIFKELDKQYTKYARKYEGYELKQRLTQVLARKGYDFSDIASALREYL</sequence>
<proteinExistence type="inferred from homology"/>
<comment type="function">
    <text evidence="1">Modulates RecA activity.</text>
</comment>
<comment type="subcellular location">
    <subcellularLocation>
        <location evidence="1">Cytoplasm</location>
    </subcellularLocation>
</comment>
<comment type="similarity">
    <text evidence="1">Belongs to the RecX family.</text>
</comment>
<keyword id="KW-0963">Cytoplasm</keyword>
<evidence type="ECO:0000255" key="1">
    <source>
        <dbReference type="HAMAP-Rule" id="MF_01114"/>
    </source>
</evidence>
<accession>B1I8A9</accession>